<evidence type="ECO:0000250" key="1">
    <source>
        <dbReference type="UniProtKB" id="P00415"/>
    </source>
</evidence>
<evidence type="ECO:0000250" key="2">
    <source>
        <dbReference type="UniProtKB" id="P00420"/>
    </source>
</evidence>
<evidence type="ECO:0000305" key="3"/>
<organism>
    <name type="scientific">Nanger dama</name>
    <name type="common">Dama gazelle</name>
    <name type="synonym">Gazella dama</name>
    <dbReference type="NCBI Taxonomy" id="67940"/>
    <lineage>
        <taxon>Eukaryota</taxon>
        <taxon>Metazoa</taxon>
        <taxon>Chordata</taxon>
        <taxon>Craniata</taxon>
        <taxon>Vertebrata</taxon>
        <taxon>Euteleostomi</taxon>
        <taxon>Mammalia</taxon>
        <taxon>Eutheria</taxon>
        <taxon>Laurasiatheria</taxon>
        <taxon>Artiodactyla</taxon>
        <taxon>Ruminantia</taxon>
        <taxon>Pecora</taxon>
        <taxon>Bovidae</taxon>
        <taxon>Antilopinae</taxon>
        <taxon>Nanger</taxon>
    </lineage>
</organism>
<geneLocation type="mitochondrion"/>
<reference key="1">
    <citation type="journal article" date="1999" name="Mol. Phylogenet. Evol.">
        <title>Phylogenetic relationships in the bovid subfamily Antilopinae based on mitochondrial DNA sequences.</title>
        <authorList>
            <person name="Rebholz W.E.R."/>
            <person name="Harley E.H."/>
        </authorList>
    </citation>
    <scope>NUCLEOTIDE SEQUENCE [GENOMIC DNA]</scope>
    <source>
        <strain>Ssp. mhorr</strain>
        <strain>Ssp. ruficollis</strain>
    </source>
</reference>
<gene>
    <name type="primary">MT-CO3</name>
    <name type="synonym">COIII</name>
    <name type="synonym">COXIII</name>
    <name type="synonym">MTCO3</name>
</gene>
<name>COX3_NANDA</name>
<keyword id="KW-0472">Membrane</keyword>
<keyword id="KW-0496">Mitochondrion</keyword>
<keyword id="KW-0999">Mitochondrion inner membrane</keyword>
<keyword id="KW-1278">Translocase</keyword>
<keyword id="KW-0812">Transmembrane</keyword>
<keyword id="KW-1133">Transmembrane helix</keyword>
<feature type="chain" id="PRO_0000183777" description="Cytochrome c oxidase subunit 3">
    <location>
        <begin position="1"/>
        <end position="261"/>
    </location>
</feature>
<feature type="topological domain" description="Mitochondrial matrix" evidence="1">
    <location>
        <begin position="1"/>
        <end position="15"/>
    </location>
</feature>
<feature type="transmembrane region" description="Helical; Name=I" evidence="1">
    <location>
        <begin position="16"/>
        <end position="34"/>
    </location>
</feature>
<feature type="topological domain" description="Mitochondrial intermembrane" evidence="1">
    <location>
        <begin position="35"/>
        <end position="40"/>
    </location>
</feature>
<feature type="transmembrane region" description="Helical; Name=II" evidence="1">
    <location>
        <begin position="41"/>
        <end position="66"/>
    </location>
</feature>
<feature type="topological domain" description="Mitochondrial matrix" evidence="1">
    <location>
        <begin position="67"/>
        <end position="72"/>
    </location>
</feature>
<feature type="transmembrane region" description="Helical; Name=III" evidence="1">
    <location>
        <begin position="73"/>
        <end position="105"/>
    </location>
</feature>
<feature type="topological domain" description="Mitochondrial intermembrane" evidence="1">
    <location>
        <begin position="106"/>
        <end position="128"/>
    </location>
</feature>
<feature type="transmembrane region" description="Helical; Name=IV" evidence="1">
    <location>
        <begin position="129"/>
        <end position="152"/>
    </location>
</feature>
<feature type="topological domain" description="Mitochondrial matrix" evidence="1">
    <location>
        <begin position="153"/>
        <end position="155"/>
    </location>
</feature>
<feature type="transmembrane region" description="Helical; Name=V" evidence="1">
    <location>
        <begin position="156"/>
        <end position="183"/>
    </location>
</feature>
<feature type="topological domain" description="Mitochondrial intermembrane" evidence="1">
    <location>
        <begin position="184"/>
        <end position="190"/>
    </location>
</feature>
<feature type="transmembrane region" description="Helical; Name=VI" evidence="1">
    <location>
        <begin position="191"/>
        <end position="223"/>
    </location>
</feature>
<feature type="topological domain" description="Mitochondrial matrix" evidence="1">
    <location>
        <begin position="224"/>
        <end position="232"/>
    </location>
</feature>
<feature type="transmembrane region" description="Helical; Name=VII" evidence="1">
    <location>
        <begin position="233"/>
        <end position="256"/>
    </location>
</feature>
<feature type="topological domain" description="Mitochondrial intermembrane" evidence="1">
    <location>
        <begin position="257"/>
        <end position="261"/>
    </location>
</feature>
<dbReference type="EC" id="7.1.1.9"/>
<dbReference type="EMBL" id="AF030469">
    <property type="protein sequence ID" value="AAB93608.1"/>
    <property type="molecule type" value="Genomic_DNA"/>
</dbReference>
<dbReference type="EMBL" id="AF030470">
    <property type="protein sequence ID" value="AAB93609.1"/>
    <property type="molecule type" value="Genomic_DNA"/>
</dbReference>
<dbReference type="SMR" id="O48374"/>
<dbReference type="CTD" id="4514"/>
<dbReference type="GO" id="GO:0005743">
    <property type="term" value="C:mitochondrial inner membrane"/>
    <property type="evidence" value="ECO:0007669"/>
    <property type="project" value="UniProtKB-SubCell"/>
</dbReference>
<dbReference type="GO" id="GO:0045277">
    <property type="term" value="C:respiratory chain complex IV"/>
    <property type="evidence" value="ECO:0000250"/>
    <property type="project" value="UniProtKB"/>
</dbReference>
<dbReference type="GO" id="GO:0004129">
    <property type="term" value="F:cytochrome-c oxidase activity"/>
    <property type="evidence" value="ECO:0007669"/>
    <property type="project" value="UniProtKB-EC"/>
</dbReference>
<dbReference type="GO" id="GO:0006123">
    <property type="term" value="P:mitochondrial electron transport, cytochrome c to oxygen"/>
    <property type="evidence" value="ECO:0007669"/>
    <property type="project" value="TreeGrafter"/>
</dbReference>
<dbReference type="GO" id="GO:0008535">
    <property type="term" value="P:respiratory chain complex IV assembly"/>
    <property type="evidence" value="ECO:0000250"/>
    <property type="project" value="UniProtKB"/>
</dbReference>
<dbReference type="CDD" id="cd01665">
    <property type="entry name" value="Cyt_c_Oxidase_III"/>
    <property type="match status" value="1"/>
</dbReference>
<dbReference type="FunFam" id="1.10.287.70:FF:000048">
    <property type="entry name" value="Cytochrome c oxidase subunit 3"/>
    <property type="match status" value="1"/>
</dbReference>
<dbReference type="FunFam" id="1.20.120.80:FF:000002">
    <property type="entry name" value="Cytochrome c oxidase subunit 3"/>
    <property type="match status" value="1"/>
</dbReference>
<dbReference type="Gene3D" id="1.10.287.70">
    <property type="match status" value="1"/>
</dbReference>
<dbReference type="Gene3D" id="1.20.120.80">
    <property type="entry name" value="Cytochrome c oxidase, subunit III, four-helix bundle"/>
    <property type="match status" value="1"/>
</dbReference>
<dbReference type="InterPro" id="IPR024791">
    <property type="entry name" value="Cyt_c/ubiquinol_Oxase_su3"/>
</dbReference>
<dbReference type="InterPro" id="IPR033945">
    <property type="entry name" value="Cyt_c_oxase_su3_dom"/>
</dbReference>
<dbReference type="InterPro" id="IPR000298">
    <property type="entry name" value="Cyt_c_oxidase-like_su3"/>
</dbReference>
<dbReference type="InterPro" id="IPR035973">
    <property type="entry name" value="Cyt_c_oxidase_su3-like_sf"/>
</dbReference>
<dbReference type="InterPro" id="IPR013833">
    <property type="entry name" value="Cyt_c_oxidase_su3_a-hlx"/>
</dbReference>
<dbReference type="PANTHER" id="PTHR11403:SF7">
    <property type="entry name" value="CYTOCHROME C OXIDASE SUBUNIT 3"/>
    <property type="match status" value="1"/>
</dbReference>
<dbReference type="PANTHER" id="PTHR11403">
    <property type="entry name" value="CYTOCHROME C OXIDASE SUBUNIT III"/>
    <property type="match status" value="1"/>
</dbReference>
<dbReference type="Pfam" id="PF00510">
    <property type="entry name" value="COX3"/>
    <property type="match status" value="1"/>
</dbReference>
<dbReference type="SUPFAM" id="SSF81452">
    <property type="entry name" value="Cytochrome c oxidase subunit III-like"/>
    <property type="match status" value="1"/>
</dbReference>
<dbReference type="PROSITE" id="PS50253">
    <property type="entry name" value="COX3"/>
    <property type="match status" value="1"/>
</dbReference>
<comment type="function">
    <text evidence="2">Component of the cytochrome c oxidase, the last enzyme in the mitochondrial electron transport chain which drives oxidative phosphorylation. The respiratory chain contains 3 multisubunit complexes succinate dehydrogenase (complex II, CII), ubiquinol-cytochrome c oxidoreductase (cytochrome b-c1 complex, complex III, CIII) and cytochrome c oxidase (complex IV, CIV), that cooperate to transfer electrons derived from NADH and succinate to molecular oxygen, creating an electrochemical gradient over the inner membrane that drives transmembrane transport and the ATP synthase. Cytochrome c oxidase is the component of the respiratory chain that catalyzes the reduction of oxygen to water. Electrons originating from reduced cytochrome c in the intermembrane space (IMS) are transferred via the dinuclear copper A center (CU(A)) of subunit 2 and heme A of subunit 1 to the active site in subunit 1, a binuclear center (BNC) formed by heme A3 and copper B (CU(B)). The BNC reduces molecular oxygen to 2 water molecules using 4 electrons from cytochrome c in the IMS and 4 protons from the mitochondrial matrix.</text>
</comment>
<comment type="catalytic activity">
    <reaction evidence="2">
        <text>4 Fe(II)-[cytochrome c] + O2 + 8 H(+)(in) = 4 Fe(III)-[cytochrome c] + 2 H2O + 4 H(+)(out)</text>
        <dbReference type="Rhea" id="RHEA:11436"/>
        <dbReference type="Rhea" id="RHEA-COMP:10350"/>
        <dbReference type="Rhea" id="RHEA-COMP:14399"/>
        <dbReference type="ChEBI" id="CHEBI:15377"/>
        <dbReference type="ChEBI" id="CHEBI:15378"/>
        <dbReference type="ChEBI" id="CHEBI:15379"/>
        <dbReference type="ChEBI" id="CHEBI:29033"/>
        <dbReference type="ChEBI" id="CHEBI:29034"/>
        <dbReference type="EC" id="7.1.1.9"/>
    </reaction>
    <physiologicalReaction direction="left-to-right" evidence="2">
        <dbReference type="Rhea" id="RHEA:11437"/>
    </physiologicalReaction>
</comment>
<comment type="subunit">
    <text evidence="1">Component of the cytochrome c oxidase (complex IV, CIV), a multisubunit enzyme composed of 14 subunits. The complex is composed of a catalytic core of 3 subunits MT-CO1, MT-CO2 and MT-CO3, encoded in the mitochondrial DNA, and 11 supernumerary subunits COX4I, COX5A, COX5B, COX6A, COX6B, COX6C, COX7A, COX7B, COX7C, COX8 and NDUFA4, which are encoded in the nuclear genome. The complex exists as a monomer or a dimer and forms supercomplexes (SCs) in the inner mitochondrial membrane with NADH-ubiquinone oxidoreductase (complex I, CI) and ubiquinol-cytochrome c oxidoreductase (cytochrome b-c1 complex, complex III, CIII), resulting in different assemblies (supercomplex SCI(1)III(2)IV(1) and megacomplex MCI(2)III(2)IV(2)).</text>
</comment>
<comment type="subcellular location">
    <subcellularLocation>
        <location evidence="1">Mitochondrion inner membrane</location>
        <topology evidence="1">Multi-pass membrane protein</topology>
    </subcellularLocation>
</comment>
<comment type="similarity">
    <text evidence="3">Belongs to the cytochrome c oxidase subunit 3 family.</text>
</comment>
<proteinExistence type="inferred from homology"/>
<accession>O48374</accession>
<protein>
    <recommendedName>
        <fullName>Cytochrome c oxidase subunit 3</fullName>
        <ecNumber>7.1.1.9</ecNumber>
    </recommendedName>
    <alternativeName>
        <fullName>Cytochrome c oxidase polypeptide III</fullName>
    </alternativeName>
</protein>
<sequence>MTHQTHAYHMVNPSPWPLTGALSALLMTSGLIMWFHFNSVALLTLGLTTNMLTMYQWWRDVIRESTFQGHHTPNVQKGLRYGMILFIISEVLFFTGFFWAFYHSSLAPTPELGGCWPPTGIHPLNPLEVPLLNTSVLLASGVSITWAHHSLMEGNRNHMLQALFITIALGVYFTLLQASEYYEAPFTISDGVYGSTFFVATGFHGLHVIIGSTFLIVCFFRQLKFHFTSSHHFGFEAAAWYWHFVDVVWLFLYVSIYWWGS</sequence>